<feature type="chain" id="PRO_0000226117" description="Serine/threonine-protein phosphatase 2A activator 2">
    <location>
        <begin position="1"/>
        <end position="352"/>
    </location>
</feature>
<gene>
    <name type="primary">rrd2</name>
    <name type="ORF">SPAC1782.05</name>
</gene>
<proteinExistence type="inferred from homology"/>
<keyword id="KW-0963">Cytoplasm</keyword>
<keyword id="KW-0413">Isomerase</keyword>
<keyword id="KW-1185">Reference proteome</keyword>
<keyword id="KW-0697">Rotamase</keyword>
<accession>Q9P7H4</accession>
<sequence>MLSREEQNRCFVPVRRILDNEDLKLFKEGDAYKLIDSFICDLDEAVKDKPISASIPQSSSIEHVLNILDRVGEIKQENPAIDNMGSRFGNPAFQSFYDQVYIETPKLHQVFGIEHNAAMEAGRYFYESFGNRKRIDYGSGHELYFMSWLLILKQLGIFTKNDYPALVVRVFVKYVELMRSLQIFYTLEPAGSHGVWGLDDFHFLPFLFGAAQLVNHKYLRPKHVRDPEILEMCRADYMYLGYVYFLNKLKPSVSLRFHSPMIDDISAVKTWSKVNEGMIKMYRAEVLGKLPIMQHYLFGHLIPASPGMSPAPQDGDDSEVTHVHSHYADCCGIKIPSAISAAKNNGSRIPFD</sequence>
<protein>
    <recommendedName>
        <fullName>Serine/threonine-protein phosphatase 2A activator 2</fullName>
        <ecNumber>5.2.1.8</ecNumber>
    </recommendedName>
    <alternativeName>
        <fullName>Peptidyl-prolyl cis-trans isomerase PTPA-2</fullName>
        <shortName>PPIase PTPA-2</shortName>
        <shortName>Rotamase PTPA-2</shortName>
    </alternativeName>
    <alternativeName>
        <fullName>Phosphotyrosyl phosphatase activator 2</fullName>
    </alternativeName>
</protein>
<comment type="function">
    <text evidence="1">PPIases accelerate the folding of proteins. It catalyzes the cis-trans isomerization of proline imidic peptide bonds in oligopeptides. Acts as a regulatory subunit for PP2A-like phosphatases modulating their activity or substrate specificity, probably by inducing a conformational change in the catalytic subunit, a direct target of the PPIase. Can reactivate inactive phosphatase PP2A-phosphatase methylesterase complexes (PP2Ai) in presence of ATP and Mg(2+) by dissociating the inactive form from the complex (By similarity).</text>
</comment>
<comment type="catalytic activity">
    <reaction>
        <text>[protein]-peptidylproline (omega=180) = [protein]-peptidylproline (omega=0)</text>
        <dbReference type="Rhea" id="RHEA:16237"/>
        <dbReference type="Rhea" id="RHEA-COMP:10747"/>
        <dbReference type="Rhea" id="RHEA-COMP:10748"/>
        <dbReference type="ChEBI" id="CHEBI:83833"/>
        <dbReference type="ChEBI" id="CHEBI:83834"/>
        <dbReference type="EC" id="5.2.1.8"/>
    </reaction>
</comment>
<comment type="subcellular location">
    <subcellularLocation>
        <location evidence="1">Cytoplasm</location>
    </subcellularLocation>
</comment>
<comment type="similarity">
    <text evidence="2">Belongs to the PTPA-type PPIase family.</text>
</comment>
<organism>
    <name type="scientific">Schizosaccharomyces pombe (strain 972 / ATCC 24843)</name>
    <name type="common">Fission yeast</name>
    <dbReference type="NCBI Taxonomy" id="284812"/>
    <lineage>
        <taxon>Eukaryota</taxon>
        <taxon>Fungi</taxon>
        <taxon>Dikarya</taxon>
        <taxon>Ascomycota</taxon>
        <taxon>Taphrinomycotina</taxon>
        <taxon>Schizosaccharomycetes</taxon>
        <taxon>Schizosaccharomycetales</taxon>
        <taxon>Schizosaccharomycetaceae</taxon>
        <taxon>Schizosaccharomyces</taxon>
    </lineage>
</organism>
<name>PTPA2_SCHPO</name>
<evidence type="ECO:0000250" key="1"/>
<evidence type="ECO:0000305" key="2"/>
<dbReference type="EC" id="5.2.1.8"/>
<dbReference type="EMBL" id="CU329670">
    <property type="protein sequence ID" value="CAB76267.1"/>
    <property type="molecule type" value="Genomic_DNA"/>
</dbReference>
<dbReference type="PIR" id="T50095">
    <property type="entry name" value="T50095"/>
</dbReference>
<dbReference type="SMR" id="Q9P7H4"/>
<dbReference type="BioGRID" id="278814">
    <property type="interactions" value="265"/>
</dbReference>
<dbReference type="DIP" id="DIP-61478N"/>
<dbReference type="FunCoup" id="Q9P7H4">
    <property type="interactions" value="70"/>
</dbReference>
<dbReference type="IntAct" id="Q9P7H4">
    <property type="interactions" value="1"/>
</dbReference>
<dbReference type="STRING" id="284812.Q9P7H4"/>
<dbReference type="PaxDb" id="4896-SPAC1782.05.1"/>
<dbReference type="EnsemblFungi" id="SPAC1782.05.1">
    <property type="protein sequence ID" value="SPAC1782.05.1:pep"/>
    <property type="gene ID" value="SPAC1782.05"/>
</dbReference>
<dbReference type="KEGG" id="spo:2542349"/>
<dbReference type="PomBase" id="SPAC1782.05"/>
<dbReference type="VEuPathDB" id="FungiDB:SPAC1782.05"/>
<dbReference type="eggNOG" id="KOG2867">
    <property type="taxonomic scope" value="Eukaryota"/>
</dbReference>
<dbReference type="HOGENOM" id="CLU_030733_0_0_1"/>
<dbReference type="InParanoid" id="Q9P7H4"/>
<dbReference type="OMA" id="SWIKINA"/>
<dbReference type="PhylomeDB" id="Q9P7H4"/>
<dbReference type="PRO" id="PR:Q9P7H4"/>
<dbReference type="Proteomes" id="UP000002485">
    <property type="component" value="Chromosome I"/>
</dbReference>
<dbReference type="GO" id="GO:0005737">
    <property type="term" value="C:cytoplasm"/>
    <property type="evidence" value="ECO:0000314"/>
    <property type="project" value="PomBase"/>
</dbReference>
<dbReference type="GO" id="GO:0005634">
    <property type="term" value="C:nucleus"/>
    <property type="evidence" value="ECO:0000318"/>
    <property type="project" value="GO_Central"/>
</dbReference>
<dbReference type="GO" id="GO:0000159">
    <property type="term" value="C:protein phosphatase type 2A complex"/>
    <property type="evidence" value="ECO:0000318"/>
    <property type="project" value="GO_Central"/>
</dbReference>
<dbReference type="GO" id="GO:0003755">
    <property type="term" value="F:peptidyl-prolyl cis-trans isomerase activity"/>
    <property type="evidence" value="ECO:0000318"/>
    <property type="project" value="GO_Central"/>
</dbReference>
<dbReference type="GO" id="GO:0008160">
    <property type="term" value="F:protein tyrosine phosphatase activator activity"/>
    <property type="evidence" value="ECO:0000318"/>
    <property type="project" value="GO_Central"/>
</dbReference>
<dbReference type="GO" id="GO:0007052">
    <property type="term" value="P:mitotic spindle organization"/>
    <property type="evidence" value="ECO:0000318"/>
    <property type="project" value="GO_Central"/>
</dbReference>
<dbReference type="GO" id="GO:0031029">
    <property type="term" value="P:regulation of septation initiation signaling"/>
    <property type="evidence" value="ECO:0000269"/>
    <property type="project" value="PomBase"/>
</dbReference>
<dbReference type="CDD" id="cd04087">
    <property type="entry name" value="PTPA"/>
    <property type="match status" value="1"/>
</dbReference>
<dbReference type="FunFam" id="1.20.120.1150:FF:000002">
    <property type="entry name" value="Serine/threonine-protein phosphatase 2A activator"/>
    <property type="match status" value="1"/>
</dbReference>
<dbReference type="Gene3D" id="1.20.120.1150">
    <property type="match status" value="1"/>
</dbReference>
<dbReference type="InterPro" id="IPR004327">
    <property type="entry name" value="Phstyr_phstse_ac"/>
</dbReference>
<dbReference type="InterPro" id="IPR043170">
    <property type="entry name" value="PTPA_C_lid"/>
</dbReference>
<dbReference type="InterPro" id="IPR037218">
    <property type="entry name" value="PTPA_sf"/>
</dbReference>
<dbReference type="PANTHER" id="PTHR10012">
    <property type="entry name" value="SERINE/THREONINE-PROTEIN PHOSPHATASE 2A REGULATORY SUBUNIT B"/>
    <property type="match status" value="1"/>
</dbReference>
<dbReference type="PANTHER" id="PTHR10012:SF7">
    <property type="entry name" value="SERINE_THREONINE-PROTEIN PHOSPHATASE 2A ACTIVATOR 2"/>
    <property type="match status" value="1"/>
</dbReference>
<dbReference type="Pfam" id="PF03095">
    <property type="entry name" value="PTPA"/>
    <property type="match status" value="1"/>
</dbReference>
<dbReference type="PIRSF" id="PIRSF016325">
    <property type="entry name" value="Phstyr_phstse_ac"/>
    <property type="match status" value="1"/>
</dbReference>
<dbReference type="SUPFAM" id="SSF140984">
    <property type="entry name" value="PTPA-like"/>
    <property type="match status" value="1"/>
</dbReference>
<reference key="1">
    <citation type="journal article" date="2002" name="Nature">
        <title>The genome sequence of Schizosaccharomyces pombe.</title>
        <authorList>
            <person name="Wood V."/>
            <person name="Gwilliam R."/>
            <person name="Rajandream M.A."/>
            <person name="Lyne M.H."/>
            <person name="Lyne R."/>
            <person name="Stewart A."/>
            <person name="Sgouros J.G."/>
            <person name="Peat N."/>
            <person name="Hayles J."/>
            <person name="Baker S.G."/>
            <person name="Basham D."/>
            <person name="Bowman S."/>
            <person name="Brooks K."/>
            <person name="Brown D."/>
            <person name="Brown S."/>
            <person name="Chillingworth T."/>
            <person name="Churcher C.M."/>
            <person name="Collins M."/>
            <person name="Connor R."/>
            <person name="Cronin A."/>
            <person name="Davis P."/>
            <person name="Feltwell T."/>
            <person name="Fraser A."/>
            <person name="Gentles S."/>
            <person name="Goble A."/>
            <person name="Hamlin N."/>
            <person name="Harris D.E."/>
            <person name="Hidalgo J."/>
            <person name="Hodgson G."/>
            <person name="Holroyd S."/>
            <person name="Hornsby T."/>
            <person name="Howarth S."/>
            <person name="Huckle E.J."/>
            <person name="Hunt S."/>
            <person name="Jagels K."/>
            <person name="James K.D."/>
            <person name="Jones L."/>
            <person name="Jones M."/>
            <person name="Leather S."/>
            <person name="McDonald S."/>
            <person name="McLean J."/>
            <person name="Mooney P."/>
            <person name="Moule S."/>
            <person name="Mungall K.L."/>
            <person name="Murphy L.D."/>
            <person name="Niblett D."/>
            <person name="Odell C."/>
            <person name="Oliver K."/>
            <person name="O'Neil S."/>
            <person name="Pearson D."/>
            <person name="Quail M.A."/>
            <person name="Rabbinowitsch E."/>
            <person name="Rutherford K.M."/>
            <person name="Rutter S."/>
            <person name="Saunders D."/>
            <person name="Seeger K."/>
            <person name="Sharp S."/>
            <person name="Skelton J."/>
            <person name="Simmonds M.N."/>
            <person name="Squares R."/>
            <person name="Squares S."/>
            <person name="Stevens K."/>
            <person name="Taylor K."/>
            <person name="Taylor R.G."/>
            <person name="Tivey A."/>
            <person name="Walsh S.V."/>
            <person name="Warren T."/>
            <person name="Whitehead S."/>
            <person name="Woodward J.R."/>
            <person name="Volckaert G."/>
            <person name="Aert R."/>
            <person name="Robben J."/>
            <person name="Grymonprez B."/>
            <person name="Weltjens I."/>
            <person name="Vanstreels E."/>
            <person name="Rieger M."/>
            <person name="Schaefer M."/>
            <person name="Mueller-Auer S."/>
            <person name="Gabel C."/>
            <person name="Fuchs M."/>
            <person name="Duesterhoeft A."/>
            <person name="Fritzc C."/>
            <person name="Holzer E."/>
            <person name="Moestl D."/>
            <person name="Hilbert H."/>
            <person name="Borzym K."/>
            <person name="Langer I."/>
            <person name="Beck A."/>
            <person name="Lehrach H."/>
            <person name="Reinhardt R."/>
            <person name="Pohl T.M."/>
            <person name="Eger P."/>
            <person name="Zimmermann W."/>
            <person name="Wedler H."/>
            <person name="Wambutt R."/>
            <person name="Purnelle B."/>
            <person name="Goffeau A."/>
            <person name="Cadieu E."/>
            <person name="Dreano S."/>
            <person name="Gloux S."/>
            <person name="Lelaure V."/>
            <person name="Mottier S."/>
            <person name="Galibert F."/>
            <person name="Aves S.J."/>
            <person name="Xiang Z."/>
            <person name="Hunt C."/>
            <person name="Moore K."/>
            <person name="Hurst S.M."/>
            <person name="Lucas M."/>
            <person name="Rochet M."/>
            <person name="Gaillardin C."/>
            <person name="Tallada V.A."/>
            <person name="Garzon A."/>
            <person name="Thode G."/>
            <person name="Daga R.R."/>
            <person name="Cruzado L."/>
            <person name="Jimenez J."/>
            <person name="Sanchez M."/>
            <person name="del Rey F."/>
            <person name="Benito J."/>
            <person name="Dominguez A."/>
            <person name="Revuelta J.L."/>
            <person name="Moreno S."/>
            <person name="Armstrong J."/>
            <person name="Forsburg S.L."/>
            <person name="Cerutti L."/>
            <person name="Lowe T."/>
            <person name="McCombie W.R."/>
            <person name="Paulsen I."/>
            <person name="Potashkin J."/>
            <person name="Shpakovski G.V."/>
            <person name="Ussery D."/>
            <person name="Barrell B.G."/>
            <person name="Nurse P."/>
        </authorList>
    </citation>
    <scope>NUCLEOTIDE SEQUENCE [LARGE SCALE GENOMIC DNA]</scope>
    <source>
        <strain>972 / ATCC 24843</strain>
    </source>
</reference>